<sequence>MARSVKKGPFCDAHLLKKVEAAAASRDKKPIKTWSRRSTILPDFIGLTIAVHNGRQHVPVYISENMVGHKLGEFALTRTFKGHAADKKAKK</sequence>
<gene>
    <name evidence="1" type="primary">rpsS</name>
    <name type="ordered locus">Bmul_0253</name>
    <name type="ordered locus">BMULJ_03001</name>
</gene>
<name>RS19_BURM1</name>
<dbReference type="EMBL" id="CP000868">
    <property type="protein sequence ID" value="ABX13948.1"/>
    <property type="molecule type" value="Genomic_DNA"/>
</dbReference>
<dbReference type="EMBL" id="AP009385">
    <property type="protein sequence ID" value="BAG44886.1"/>
    <property type="molecule type" value="Genomic_DNA"/>
</dbReference>
<dbReference type="RefSeq" id="WP_004199273.1">
    <property type="nucleotide sequence ID" value="NC_010804.1"/>
</dbReference>
<dbReference type="SMR" id="A9ADJ7"/>
<dbReference type="STRING" id="395019.BMULJ_03001"/>
<dbReference type="GeneID" id="98107156"/>
<dbReference type="KEGG" id="bmj:BMULJ_03001"/>
<dbReference type="KEGG" id="bmu:Bmul_0253"/>
<dbReference type="eggNOG" id="COG0185">
    <property type="taxonomic scope" value="Bacteria"/>
</dbReference>
<dbReference type="HOGENOM" id="CLU_144911_0_1_4"/>
<dbReference type="Proteomes" id="UP000008815">
    <property type="component" value="Chromosome 1"/>
</dbReference>
<dbReference type="GO" id="GO:0005737">
    <property type="term" value="C:cytoplasm"/>
    <property type="evidence" value="ECO:0007669"/>
    <property type="project" value="UniProtKB-ARBA"/>
</dbReference>
<dbReference type="GO" id="GO:0015935">
    <property type="term" value="C:small ribosomal subunit"/>
    <property type="evidence" value="ECO:0007669"/>
    <property type="project" value="InterPro"/>
</dbReference>
<dbReference type="GO" id="GO:0019843">
    <property type="term" value="F:rRNA binding"/>
    <property type="evidence" value="ECO:0007669"/>
    <property type="project" value="UniProtKB-UniRule"/>
</dbReference>
<dbReference type="GO" id="GO:0003735">
    <property type="term" value="F:structural constituent of ribosome"/>
    <property type="evidence" value="ECO:0007669"/>
    <property type="project" value="InterPro"/>
</dbReference>
<dbReference type="GO" id="GO:0000028">
    <property type="term" value="P:ribosomal small subunit assembly"/>
    <property type="evidence" value="ECO:0007669"/>
    <property type="project" value="TreeGrafter"/>
</dbReference>
<dbReference type="GO" id="GO:0006412">
    <property type="term" value="P:translation"/>
    <property type="evidence" value="ECO:0007669"/>
    <property type="project" value="UniProtKB-UniRule"/>
</dbReference>
<dbReference type="FunFam" id="3.30.860.10:FF:000001">
    <property type="entry name" value="30S ribosomal protein S19"/>
    <property type="match status" value="1"/>
</dbReference>
<dbReference type="Gene3D" id="3.30.860.10">
    <property type="entry name" value="30s Ribosomal Protein S19, Chain A"/>
    <property type="match status" value="1"/>
</dbReference>
<dbReference type="HAMAP" id="MF_00531">
    <property type="entry name" value="Ribosomal_uS19"/>
    <property type="match status" value="1"/>
</dbReference>
<dbReference type="InterPro" id="IPR002222">
    <property type="entry name" value="Ribosomal_uS19"/>
</dbReference>
<dbReference type="InterPro" id="IPR005732">
    <property type="entry name" value="Ribosomal_uS19_bac-type"/>
</dbReference>
<dbReference type="InterPro" id="IPR020934">
    <property type="entry name" value="Ribosomal_uS19_CS"/>
</dbReference>
<dbReference type="InterPro" id="IPR023575">
    <property type="entry name" value="Ribosomal_uS19_SF"/>
</dbReference>
<dbReference type="NCBIfam" id="TIGR01050">
    <property type="entry name" value="rpsS_bact"/>
    <property type="match status" value="1"/>
</dbReference>
<dbReference type="PANTHER" id="PTHR11880">
    <property type="entry name" value="RIBOSOMAL PROTEIN S19P FAMILY MEMBER"/>
    <property type="match status" value="1"/>
</dbReference>
<dbReference type="PANTHER" id="PTHR11880:SF8">
    <property type="entry name" value="SMALL RIBOSOMAL SUBUNIT PROTEIN US19M"/>
    <property type="match status" value="1"/>
</dbReference>
<dbReference type="Pfam" id="PF00203">
    <property type="entry name" value="Ribosomal_S19"/>
    <property type="match status" value="1"/>
</dbReference>
<dbReference type="PIRSF" id="PIRSF002144">
    <property type="entry name" value="Ribosomal_S19"/>
    <property type="match status" value="1"/>
</dbReference>
<dbReference type="PRINTS" id="PR00975">
    <property type="entry name" value="RIBOSOMALS19"/>
</dbReference>
<dbReference type="SUPFAM" id="SSF54570">
    <property type="entry name" value="Ribosomal protein S19"/>
    <property type="match status" value="1"/>
</dbReference>
<dbReference type="PROSITE" id="PS00323">
    <property type="entry name" value="RIBOSOMAL_S19"/>
    <property type="match status" value="1"/>
</dbReference>
<comment type="function">
    <text evidence="1">Protein S19 forms a complex with S13 that binds strongly to the 16S ribosomal RNA.</text>
</comment>
<comment type="similarity">
    <text evidence="1">Belongs to the universal ribosomal protein uS19 family.</text>
</comment>
<organism>
    <name type="scientific">Burkholderia multivorans (strain ATCC 17616 / 249)</name>
    <dbReference type="NCBI Taxonomy" id="395019"/>
    <lineage>
        <taxon>Bacteria</taxon>
        <taxon>Pseudomonadati</taxon>
        <taxon>Pseudomonadota</taxon>
        <taxon>Betaproteobacteria</taxon>
        <taxon>Burkholderiales</taxon>
        <taxon>Burkholderiaceae</taxon>
        <taxon>Burkholderia</taxon>
        <taxon>Burkholderia cepacia complex</taxon>
    </lineage>
</organism>
<keyword id="KW-1185">Reference proteome</keyword>
<keyword id="KW-0687">Ribonucleoprotein</keyword>
<keyword id="KW-0689">Ribosomal protein</keyword>
<keyword id="KW-0694">RNA-binding</keyword>
<keyword id="KW-0699">rRNA-binding</keyword>
<accession>A9ADJ7</accession>
<protein>
    <recommendedName>
        <fullName evidence="1">Small ribosomal subunit protein uS19</fullName>
    </recommendedName>
    <alternativeName>
        <fullName evidence="2">30S ribosomal protein S19</fullName>
    </alternativeName>
</protein>
<evidence type="ECO:0000255" key="1">
    <source>
        <dbReference type="HAMAP-Rule" id="MF_00531"/>
    </source>
</evidence>
<evidence type="ECO:0000305" key="2"/>
<feature type="chain" id="PRO_1000127941" description="Small ribosomal subunit protein uS19">
    <location>
        <begin position="1"/>
        <end position="91"/>
    </location>
</feature>
<proteinExistence type="inferred from homology"/>
<reference key="1">
    <citation type="submission" date="2007-10" db="EMBL/GenBank/DDBJ databases">
        <title>Complete sequence of chromosome 1 of Burkholderia multivorans ATCC 17616.</title>
        <authorList>
            <person name="Copeland A."/>
            <person name="Lucas S."/>
            <person name="Lapidus A."/>
            <person name="Barry K."/>
            <person name="Glavina del Rio T."/>
            <person name="Dalin E."/>
            <person name="Tice H."/>
            <person name="Pitluck S."/>
            <person name="Chain P."/>
            <person name="Malfatti S."/>
            <person name="Shin M."/>
            <person name="Vergez L."/>
            <person name="Schmutz J."/>
            <person name="Larimer F."/>
            <person name="Land M."/>
            <person name="Hauser L."/>
            <person name="Kyrpides N."/>
            <person name="Kim E."/>
            <person name="Tiedje J."/>
            <person name="Richardson P."/>
        </authorList>
    </citation>
    <scope>NUCLEOTIDE SEQUENCE [LARGE SCALE GENOMIC DNA]</scope>
    <source>
        <strain>ATCC 17616 / 249</strain>
    </source>
</reference>
<reference key="2">
    <citation type="submission" date="2007-04" db="EMBL/GenBank/DDBJ databases">
        <title>Complete genome sequence of Burkholderia multivorans ATCC 17616.</title>
        <authorList>
            <person name="Ohtsubo Y."/>
            <person name="Yamashita A."/>
            <person name="Kurokawa K."/>
            <person name="Takami H."/>
            <person name="Yuhara S."/>
            <person name="Nishiyama E."/>
            <person name="Endo R."/>
            <person name="Miyazaki R."/>
            <person name="Ono A."/>
            <person name="Yano K."/>
            <person name="Ito M."/>
            <person name="Sota M."/>
            <person name="Yuji N."/>
            <person name="Hattori M."/>
            <person name="Tsuda M."/>
        </authorList>
    </citation>
    <scope>NUCLEOTIDE SEQUENCE [LARGE SCALE GENOMIC DNA]</scope>
    <source>
        <strain>ATCC 17616 / 249</strain>
    </source>
</reference>